<reference key="1">
    <citation type="journal article" date="2010" name="Environ. Microbiol.">
        <title>The genome of Syntrophomonas wolfei: new insights into syntrophic metabolism and biohydrogen production.</title>
        <authorList>
            <person name="Sieber J.R."/>
            <person name="Sims D.R."/>
            <person name="Han C."/>
            <person name="Kim E."/>
            <person name="Lykidis A."/>
            <person name="Lapidus A.L."/>
            <person name="McDonnald E."/>
            <person name="Rohlin L."/>
            <person name="Culley D.E."/>
            <person name="Gunsalus R."/>
            <person name="McInerney M.J."/>
        </authorList>
    </citation>
    <scope>NUCLEOTIDE SEQUENCE [LARGE SCALE GENOMIC DNA]</scope>
    <source>
        <strain>DSM 2245B / Goettingen</strain>
    </source>
</reference>
<proteinExistence type="inferred from homology"/>
<accession>Q0AW40</accession>
<name>HIS4_SYNWW</name>
<sequence>MIIYPAIDLKDGQCVRLVQGRVENKTVYSDAPANVARSFQEQGASFLHIVDLDGAFQGSPQNLKAIEAIAAAIDISFQVGGGLRQLSDVEKLLALGASRVIIGTRAVSHPDFIANLLDKFGPERIVLGLDAKEGMVAVEGWVSTSSVSAIDFGLQMKALGIQTAIYTDVSRDGLLQGPNLAAIKEMASSTGLDIIASGGVSSLDNIRALKELENDGVSGAIIGKALYDGKIGLVDALREAESKF</sequence>
<protein>
    <recommendedName>
        <fullName evidence="1">1-(5-phosphoribosyl)-5-[(5-phosphoribosylamino)methylideneamino] imidazole-4-carboxamide isomerase</fullName>
        <ecNumber evidence="1">5.3.1.16</ecNumber>
    </recommendedName>
    <alternativeName>
        <fullName evidence="1">Phosphoribosylformimino-5-aminoimidazole carboxamide ribotide isomerase</fullName>
    </alternativeName>
</protein>
<dbReference type="EC" id="5.3.1.16" evidence="1"/>
<dbReference type="EMBL" id="CP000448">
    <property type="protein sequence ID" value="ABI69064.1"/>
    <property type="molecule type" value="Genomic_DNA"/>
</dbReference>
<dbReference type="RefSeq" id="WP_011641159.1">
    <property type="nucleotide sequence ID" value="NC_008346.1"/>
</dbReference>
<dbReference type="SMR" id="Q0AW40"/>
<dbReference type="STRING" id="335541.Swol_1766"/>
<dbReference type="KEGG" id="swo:Swol_1766"/>
<dbReference type="eggNOG" id="COG0106">
    <property type="taxonomic scope" value="Bacteria"/>
</dbReference>
<dbReference type="HOGENOM" id="CLU_048577_1_1_9"/>
<dbReference type="OrthoDB" id="9807749at2"/>
<dbReference type="UniPathway" id="UPA00031">
    <property type="reaction ID" value="UER00009"/>
</dbReference>
<dbReference type="Proteomes" id="UP000001968">
    <property type="component" value="Chromosome"/>
</dbReference>
<dbReference type="GO" id="GO:0005737">
    <property type="term" value="C:cytoplasm"/>
    <property type="evidence" value="ECO:0007669"/>
    <property type="project" value="UniProtKB-SubCell"/>
</dbReference>
<dbReference type="GO" id="GO:0003949">
    <property type="term" value="F:1-(5-phosphoribosyl)-5-[(5-phosphoribosylamino)methylideneamino]imidazole-4-carboxamide isomerase activity"/>
    <property type="evidence" value="ECO:0007669"/>
    <property type="project" value="UniProtKB-UniRule"/>
</dbReference>
<dbReference type="GO" id="GO:0000105">
    <property type="term" value="P:L-histidine biosynthetic process"/>
    <property type="evidence" value="ECO:0007669"/>
    <property type="project" value="UniProtKB-UniRule"/>
</dbReference>
<dbReference type="GO" id="GO:0000162">
    <property type="term" value="P:L-tryptophan biosynthetic process"/>
    <property type="evidence" value="ECO:0007669"/>
    <property type="project" value="TreeGrafter"/>
</dbReference>
<dbReference type="CDD" id="cd04732">
    <property type="entry name" value="HisA"/>
    <property type="match status" value="1"/>
</dbReference>
<dbReference type="FunFam" id="3.20.20.70:FF:000009">
    <property type="entry name" value="1-(5-phosphoribosyl)-5-[(5-phosphoribosylamino)methylideneamino] imidazole-4-carboxamide isomerase"/>
    <property type="match status" value="1"/>
</dbReference>
<dbReference type="Gene3D" id="3.20.20.70">
    <property type="entry name" value="Aldolase class I"/>
    <property type="match status" value="1"/>
</dbReference>
<dbReference type="HAMAP" id="MF_01014">
    <property type="entry name" value="HisA"/>
    <property type="match status" value="1"/>
</dbReference>
<dbReference type="InterPro" id="IPR013785">
    <property type="entry name" value="Aldolase_TIM"/>
</dbReference>
<dbReference type="InterPro" id="IPR006062">
    <property type="entry name" value="His_biosynth"/>
</dbReference>
<dbReference type="InterPro" id="IPR006063">
    <property type="entry name" value="HisA_bact_arch"/>
</dbReference>
<dbReference type="InterPro" id="IPR044524">
    <property type="entry name" value="Isoase_HisA-like"/>
</dbReference>
<dbReference type="InterPro" id="IPR023016">
    <property type="entry name" value="Isoase_HisA-like_bact"/>
</dbReference>
<dbReference type="InterPro" id="IPR011060">
    <property type="entry name" value="RibuloseP-bd_barrel"/>
</dbReference>
<dbReference type="NCBIfam" id="TIGR00007">
    <property type="entry name" value="1-(5-phosphoribosyl)-5-[(5-phosphoribosylamino)methylideneamino]imidazole-4-carboxamide isomerase"/>
    <property type="match status" value="1"/>
</dbReference>
<dbReference type="NCBIfam" id="NF010112">
    <property type="entry name" value="PRK13585.1"/>
    <property type="match status" value="1"/>
</dbReference>
<dbReference type="PANTHER" id="PTHR43090">
    <property type="entry name" value="1-(5-PHOSPHORIBOSYL)-5-[(5-PHOSPHORIBOSYLAMINO)METHYLIDENEAMINO] IMIDAZOLE-4-CARBOXAMIDE ISOMERASE"/>
    <property type="match status" value="1"/>
</dbReference>
<dbReference type="PANTHER" id="PTHR43090:SF2">
    <property type="entry name" value="1-(5-PHOSPHORIBOSYL)-5-[(5-PHOSPHORIBOSYLAMINO)METHYLIDENEAMINO] IMIDAZOLE-4-CARBOXAMIDE ISOMERASE"/>
    <property type="match status" value="1"/>
</dbReference>
<dbReference type="Pfam" id="PF00977">
    <property type="entry name" value="His_biosynth"/>
    <property type="match status" value="1"/>
</dbReference>
<dbReference type="SUPFAM" id="SSF51366">
    <property type="entry name" value="Ribulose-phoshate binding barrel"/>
    <property type="match status" value="1"/>
</dbReference>
<gene>
    <name evidence="1" type="primary">hisA</name>
    <name type="ordered locus">Swol_1766</name>
</gene>
<keyword id="KW-0028">Amino-acid biosynthesis</keyword>
<keyword id="KW-0963">Cytoplasm</keyword>
<keyword id="KW-0368">Histidine biosynthesis</keyword>
<keyword id="KW-0413">Isomerase</keyword>
<keyword id="KW-1185">Reference proteome</keyword>
<evidence type="ECO:0000255" key="1">
    <source>
        <dbReference type="HAMAP-Rule" id="MF_01014"/>
    </source>
</evidence>
<organism>
    <name type="scientific">Syntrophomonas wolfei subsp. wolfei (strain DSM 2245B / Goettingen)</name>
    <dbReference type="NCBI Taxonomy" id="335541"/>
    <lineage>
        <taxon>Bacteria</taxon>
        <taxon>Bacillati</taxon>
        <taxon>Bacillota</taxon>
        <taxon>Clostridia</taxon>
        <taxon>Eubacteriales</taxon>
        <taxon>Syntrophomonadaceae</taxon>
        <taxon>Syntrophomonas</taxon>
    </lineage>
</organism>
<feature type="chain" id="PRO_0000290557" description="1-(5-phosphoribosyl)-5-[(5-phosphoribosylamino)methylideneamino] imidazole-4-carboxamide isomerase">
    <location>
        <begin position="1"/>
        <end position="244"/>
    </location>
</feature>
<feature type="active site" description="Proton acceptor" evidence="1">
    <location>
        <position position="8"/>
    </location>
</feature>
<feature type="active site" description="Proton donor" evidence="1">
    <location>
        <position position="130"/>
    </location>
</feature>
<comment type="catalytic activity">
    <reaction evidence="1">
        <text>1-(5-phospho-beta-D-ribosyl)-5-[(5-phospho-beta-D-ribosylamino)methylideneamino]imidazole-4-carboxamide = 5-[(5-phospho-1-deoxy-D-ribulos-1-ylimino)methylamino]-1-(5-phospho-beta-D-ribosyl)imidazole-4-carboxamide</text>
        <dbReference type="Rhea" id="RHEA:15469"/>
        <dbReference type="ChEBI" id="CHEBI:58435"/>
        <dbReference type="ChEBI" id="CHEBI:58525"/>
        <dbReference type="EC" id="5.3.1.16"/>
    </reaction>
</comment>
<comment type="pathway">
    <text evidence="1">Amino-acid biosynthesis; L-histidine biosynthesis; L-histidine from 5-phospho-alpha-D-ribose 1-diphosphate: step 4/9.</text>
</comment>
<comment type="subcellular location">
    <subcellularLocation>
        <location evidence="1">Cytoplasm</location>
    </subcellularLocation>
</comment>
<comment type="similarity">
    <text evidence="1">Belongs to the HisA/HisF family.</text>
</comment>